<accession>Q0BM23</accession>
<comment type="function">
    <text evidence="1">Poorly processive, error-prone DNA polymerase involved in untargeted mutagenesis. Copies undamaged DNA at stalled replication forks, which arise in vivo from mismatched or misaligned primer ends. These misaligned primers can be extended by PolIV. Exhibits no 3'-5' exonuclease (proofreading) activity. May be involved in translesional synthesis, in conjunction with the beta clamp from PolIII.</text>
</comment>
<comment type="catalytic activity">
    <reaction evidence="1">
        <text>DNA(n) + a 2'-deoxyribonucleoside 5'-triphosphate = DNA(n+1) + diphosphate</text>
        <dbReference type="Rhea" id="RHEA:22508"/>
        <dbReference type="Rhea" id="RHEA-COMP:17339"/>
        <dbReference type="Rhea" id="RHEA-COMP:17340"/>
        <dbReference type="ChEBI" id="CHEBI:33019"/>
        <dbReference type="ChEBI" id="CHEBI:61560"/>
        <dbReference type="ChEBI" id="CHEBI:173112"/>
        <dbReference type="EC" id="2.7.7.7"/>
    </reaction>
</comment>
<comment type="cofactor">
    <cofactor evidence="1">
        <name>Mg(2+)</name>
        <dbReference type="ChEBI" id="CHEBI:18420"/>
    </cofactor>
    <text evidence="1">Binds 2 magnesium ions per subunit.</text>
</comment>
<comment type="subunit">
    <text evidence="1">Monomer.</text>
</comment>
<comment type="subcellular location">
    <subcellularLocation>
        <location evidence="1">Cytoplasm</location>
    </subcellularLocation>
</comment>
<comment type="similarity">
    <text evidence="1">Belongs to the DNA polymerase type-Y family.</text>
</comment>
<proteinExistence type="inferred from homology"/>
<feature type="chain" id="PRO_1000137135" description="DNA polymerase IV">
    <location>
        <begin position="1"/>
        <end position="349"/>
    </location>
</feature>
<feature type="domain" description="UmuC" evidence="1">
    <location>
        <begin position="7"/>
        <end position="188"/>
    </location>
</feature>
<feature type="active site" evidence="1">
    <location>
        <position position="107"/>
    </location>
</feature>
<feature type="binding site" evidence="1">
    <location>
        <position position="11"/>
    </location>
    <ligand>
        <name>Mg(2+)</name>
        <dbReference type="ChEBI" id="CHEBI:18420"/>
    </ligand>
</feature>
<feature type="binding site" evidence="1">
    <location>
        <position position="106"/>
    </location>
    <ligand>
        <name>Mg(2+)</name>
        <dbReference type="ChEBI" id="CHEBI:18420"/>
    </ligand>
</feature>
<feature type="site" description="Substrate discrimination" evidence="1">
    <location>
        <position position="16"/>
    </location>
</feature>
<gene>
    <name evidence="1" type="primary">dinB</name>
    <name type="ordered locus">FTH_0960</name>
</gene>
<name>DPO4_FRATO</name>
<sequence length="349" mass="39161">MTKLRKIIHIDMDYFFAQVEEKANPSLKDKPFAVGGTNPKRGVISTCNYIAREYGVRSAMPTAIAMQKCPNLILLNTDFAKYKAASAVIRDIFYYFTDKVEPLSLDEAYLDVTDVKEYKNSATLIAQAIKQEIFNKTGLTGSAGVAPNKLLAKIASDINKPNGLYVVTPKQVDSFVKDLPVKKLFGVGKVSQEKLKSMGVETCLDLQQLSLATLVDKFGKFGSSLYNYARGIDNREVNPVRIRKSVSVENTYLEDLKTLGACLEKLPSLYDKLTSRMTEEHYKSIIGIVVKFTDTKFNKTSLTRVAKILDKEMLKNLIIELHQKRNHPIRLIGIGVKLGEIDDKQMDLF</sequence>
<evidence type="ECO:0000255" key="1">
    <source>
        <dbReference type="HAMAP-Rule" id="MF_01113"/>
    </source>
</evidence>
<dbReference type="EC" id="2.7.7.7" evidence="1"/>
<dbReference type="EMBL" id="CP000437">
    <property type="protein sequence ID" value="ABI82861.1"/>
    <property type="molecule type" value="Genomic_DNA"/>
</dbReference>
<dbReference type="RefSeq" id="WP_011648689.1">
    <property type="nucleotide sequence ID" value="NC_017463.1"/>
</dbReference>
<dbReference type="SMR" id="Q0BM23"/>
<dbReference type="KEGG" id="fth:FTH_0960"/>
<dbReference type="GO" id="GO:0005829">
    <property type="term" value="C:cytosol"/>
    <property type="evidence" value="ECO:0007669"/>
    <property type="project" value="TreeGrafter"/>
</dbReference>
<dbReference type="GO" id="GO:0003684">
    <property type="term" value="F:damaged DNA binding"/>
    <property type="evidence" value="ECO:0007669"/>
    <property type="project" value="InterPro"/>
</dbReference>
<dbReference type="GO" id="GO:0003887">
    <property type="term" value="F:DNA-directed DNA polymerase activity"/>
    <property type="evidence" value="ECO:0007669"/>
    <property type="project" value="UniProtKB-UniRule"/>
</dbReference>
<dbReference type="GO" id="GO:0000287">
    <property type="term" value="F:magnesium ion binding"/>
    <property type="evidence" value="ECO:0007669"/>
    <property type="project" value="UniProtKB-UniRule"/>
</dbReference>
<dbReference type="GO" id="GO:0006261">
    <property type="term" value="P:DNA-templated DNA replication"/>
    <property type="evidence" value="ECO:0007669"/>
    <property type="project" value="UniProtKB-UniRule"/>
</dbReference>
<dbReference type="GO" id="GO:0042276">
    <property type="term" value="P:error-prone translesion synthesis"/>
    <property type="evidence" value="ECO:0007669"/>
    <property type="project" value="TreeGrafter"/>
</dbReference>
<dbReference type="GO" id="GO:0009432">
    <property type="term" value="P:SOS response"/>
    <property type="evidence" value="ECO:0007669"/>
    <property type="project" value="TreeGrafter"/>
</dbReference>
<dbReference type="CDD" id="cd03586">
    <property type="entry name" value="PolY_Pol_IV_kappa"/>
    <property type="match status" value="1"/>
</dbReference>
<dbReference type="FunFam" id="1.10.150.20:FF:000019">
    <property type="entry name" value="DNA polymerase IV"/>
    <property type="match status" value="1"/>
</dbReference>
<dbReference type="FunFam" id="3.40.1170.60:FF:000001">
    <property type="entry name" value="DNA polymerase IV"/>
    <property type="match status" value="1"/>
</dbReference>
<dbReference type="Gene3D" id="3.30.70.270">
    <property type="match status" value="1"/>
</dbReference>
<dbReference type="Gene3D" id="3.40.1170.60">
    <property type="match status" value="1"/>
</dbReference>
<dbReference type="Gene3D" id="1.10.150.20">
    <property type="entry name" value="5' to 3' exonuclease, C-terminal subdomain"/>
    <property type="match status" value="1"/>
</dbReference>
<dbReference type="Gene3D" id="3.30.1490.100">
    <property type="entry name" value="DNA polymerase, Y-family, little finger domain"/>
    <property type="match status" value="1"/>
</dbReference>
<dbReference type="HAMAP" id="MF_01113">
    <property type="entry name" value="DNApol_IV"/>
    <property type="match status" value="1"/>
</dbReference>
<dbReference type="InterPro" id="IPR043502">
    <property type="entry name" value="DNA/RNA_pol_sf"/>
</dbReference>
<dbReference type="InterPro" id="IPR036775">
    <property type="entry name" value="DNA_pol_Y-fam_lit_finger_sf"/>
</dbReference>
<dbReference type="InterPro" id="IPR017961">
    <property type="entry name" value="DNA_pol_Y-fam_little_finger"/>
</dbReference>
<dbReference type="InterPro" id="IPR050116">
    <property type="entry name" value="DNA_polymerase-Y"/>
</dbReference>
<dbReference type="InterPro" id="IPR022880">
    <property type="entry name" value="DNApol_IV"/>
</dbReference>
<dbReference type="InterPro" id="IPR053848">
    <property type="entry name" value="IMS_HHH_1"/>
</dbReference>
<dbReference type="InterPro" id="IPR043128">
    <property type="entry name" value="Rev_trsase/Diguanyl_cyclase"/>
</dbReference>
<dbReference type="InterPro" id="IPR001126">
    <property type="entry name" value="UmuC"/>
</dbReference>
<dbReference type="NCBIfam" id="NF002677">
    <property type="entry name" value="PRK02406.1"/>
    <property type="match status" value="1"/>
</dbReference>
<dbReference type="PANTHER" id="PTHR11076:SF33">
    <property type="entry name" value="DNA POLYMERASE KAPPA"/>
    <property type="match status" value="1"/>
</dbReference>
<dbReference type="PANTHER" id="PTHR11076">
    <property type="entry name" value="DNA REPAIR POLYMERASE UMUC / TRANSFERASE FAMILY MEMBER"/>
    <property type="match status" value="1"/>
</dbReference>
<dbReference type="Pfam" id="PF00817">
    <property type="entry name" value="IMS"/>
    <property type="match status" value="1"/>
</dbReference>
<dbReference type="Pfam" id="PF11799">
    <property type="entry name" value="IMS_C"/>
    <property type="match status" value="1"/>
</dbReference>
<dbReference type="Pfam" id="PF21999">
    <property type="entry name" value="IMS_HHH_1"/>
    <property type="match status" value="1"/>
</dbReference>
<dbReference type="SUPFAM" id="SSF56672">
    <property type="entry name" value="DNA/RNA polymerases"/>
    <property type="match status" value="1"/>
</dbReference>
<dbReference type="SUPFAM" id="SSF100879">
    <property type="entry name" value="Lesion bypass DNA polymerase (Y-family), little finger domain"/>
    <property type="match status" value="1"/>
</dbReference>
<dbReference type="PROSITE" id="PS50173">
    <property type="entry name" value="UMUC"/>
    <property type="match status" value="1"/>
</dbReference>
<reference key="1">
    <citation type="journal article" date="2006" name="J. Bacteriol.">
        <title>Chromosome rearrangement and diversification of Francisella tularensis revealed by the type B (OSU18) genome sequence.</title>
        <authorList>
            <person name="Petrosino J.F."/>
            <person name="Xiang Q."/>
            <person name="Karpathy S.E."/>
            <person name="Jiang H."/>
            <person name="Yerrapragada S."/>
            <person name="Liu Y."/>
            <person name="Gioia J."/>
            <person name="Hemphill L."/>
            <person name="Gonzalez A."/>
            <person name="Raghavan T.M."/>
            <person name="Uzman A."/>
            <person name="Fox G.E."/>
            <person name="Highlander S."/>
            <person name="Reichard M."/>
            <person name="Morton R.J."/>
            <person name="Clinkenbeard K.D."/>
            <person name="Weinstock G.M."/>
        </authorList>
    </citation>
    <scope>NUCLEOTIDE SEQUENCE [LARGE SCALE GENOMIC DNA]</scope>
    <source>
        <strain>OSU18</strain>
    </source>
</reference>
<protein>
    <recommendedName>
        <fullName evidence="1">DNA polymerase IV</fullName>
        <shortName evidence="1">Pol IV</shortName>
        <ecNumber evidence="1">2.7.7.7</ecNumber>
    </recommendedName>
</protein>
<organism>
    <name type="scientific">Francisella tularensis subsp. holarctica (strain OSU18)</name>
    <dbReference type="NCBI Taxonomy" id="393011"/>
    <lineage>
        <taxon>Bacteria</taxon>
        <taxon>Pseudomonadati</taxon>
        <taxon>Pseudomonadota</taxon>
        <taxon>Gammaproteobacteria</taxon>
        <taxon>Thiotrichales</taxon>
        <taxon>Francisellaceae</taxon>
        <taxon>Francisella</taxon>
    </lineage>
</organism>
<keyword id="KW-0963">Cytoplasm</keyword>
<keyword id="KW-0227">DNA damage</keyword>
<keyword id="KW-0234">DNA repair</keyword>
<keyword id="KW-0235">DNA replication</keyword>
<keyword id="KW-0238">DNA-binding</keyword>
<keyword id="KW-0239">DNA-directed DNA polymerase</keyword>
<keyword id="KW-0460">Magnesium</keyword>
<keyword id="KW-0479">Metal-binding</keyword>
<keyword id="KW-0515">Mutator protein</keyword>
<keyword id="KW-0548">Nucleotidyltransferase</keyword>
<keyword id="KW-0808">Transferase</keyword>